<sequence>MLGAECPKPCKGKWPTPPFDPRFPNQNQTRNCYQNFLDYHRCIKTMNRRGKSTQPCEYYFRVYHSLCPISWVQRWKEQIKDGTFAGKI</sequence>
<protein>
    <recommendedName>
        <fullName>Cytochrome c oxidase subunit 6B2</fullName>
    </recommendedName>
    <alternativeName>
        <fullName>Cytochrome c oxidase subunit VIb isoform 2</fullName>
        <shortName>COX VIb-2</shortName>
    </alternativeName>
    <alternativeName>
        <fullName>Cytochrome c oxidase subunit VIb, testis-specific isoform</fullName>
    </alternativeName>
</protein>
<proteinExistence type="evidence at transcript level"/>
<comment type="function">
    <text evidence="2">Component of the cytochrome c oxidase, the last enzyme in the mitochondrial electron transport chain which drives oxidative phosphorylation. The respiratory chain contains 3 multisubunit complexes succinate dehydrogenase (complex II, CII), ubiquinol-cytochrome c oxidoreductase (cytochrome b-c1 complex, complex III, CIII) and cytochrome c oxidase (complex IV, CIV), that cooperate to transfer electrons derived from NADH and succinate to molecular oxygen, creating an electrochemical gradient over the inner membrane that drives transmembrane transport and the ATP synthase. Cytochrome c oxidase is the component of the respiratory chain that catalyzes the reduction of oxygen to water. Electrons originating from reduced cytochrome c in the intermembrane space (IMS) are transferred via the dinuclear copper A center (CU(A)) of subunit 2 and heme A of subunit 1 to the active site in subunit 1, a binuclear center (BNC) formed by heme A3 and copper B (CU(B)). The BNC reduces molecular oxygen to 2 water molecules using 4 electrons from cytochrome c in the IMS and 4 protons from the mitochondrial matrix.</text>
</comment>
<comment type="pathway">
    <text evidence="2">Energy metabolism; oxidative phosphorylation.</text>
</comment>
<comment type="subunit">
    <text evidence="1">Component of the cytochrome c oxidase (complex IV, CIV), a multisubunit enzyme composed of 14 subunits. The complex is composed of a catalytic core of 3 subunits MT-CO1, MT-CO2 and MT-CO3, encoded in the mitochondrial DNA, and 11 supernumerary subunits COX4I1 (or COX4I2), COX5A, COX5B, COX6A2 (or COX6A1), COX6B1 (or COX6B2), COX6C, COX7A1 (or COX7A2), COX7B, COX7C, COX8B and NDUFA4, which are encoded in the nuclear genome (By similarity). The complex exists as a monomer or a dimer and forms supercomplexes (SCs) in the inner mitochondrial membrane with NADH-ubiquinone oxidoreductase (complex I, CI) and ubiquinol-cytochrome c oxidoreductase (cytochrome b-c1 complex, complex III, CIII), resulting in different assemblies (supercomplex SCI(1)III(2)IV(1) and megacomplex MCI(2)III(2)IV(2)) (By similarity).</text>
</comment>
<comment type="subcellular location">
    <subcellularLocation>
        <location evidence="1">Mitochondrion inner membrane</location>
        <topology evidence="1">Peripheral membrane protein</topology>
        <orientation evidence="1">Intermembrane side</orientation>
    </subcellularLocation>
</comment>
<comment type="tissue specificity">
    <text>Testis specific.</text>
</comment>
<comment type="similarity">
    <text evidence="4">Belongs to the cytochrome c oxidase subunit 6B family.</text>
</comment>
<name>CX6B2_BOVIN</name>
<dbReference type="EMBL" id="AY152401">
    <property type="protein sequence ID" value="AAN46754.1"/>
    <property type="molecule type" value="mRNA"/>
</dbReference>
<dbReference type="EMBL" id="BC109911">
    <property type="protein sequence ID" value="AAI09912.1"/>
    <property type="molecule type" value="mRNA"/>
</dbReference>
<dbReference type="RefSeq" id="NP_001012702.1">
    <property type="nucleotide sequence ID" value="NM_001012684.1"/>
</dbReference>
<dbReference type="RefSeq" id="XP_005219732.1">
    <property type="nucleotide sequence ID" value="XM_005219675.4"/>
</dbReference>
<dbReference type="SMR" id="Q6YFP9"/>
<dbReference type="FunCoup" id="Q6YFP9">
    <property type="interactions" value="715"/>
</dbReference>
<dbReference type="STRING" id="9913.ENSBTAP00000073793"/>
<dbReference type="PaxDb" id="9913-ENSBTAP00000009474"/>
<dbReference type="GeneID" id="503554"/>
<dbReference type="KEGG" id="bta:503554"/>
<dbReference type="CTD" id="125965"/>
<dbReference type="VEuPathDB" id="HostDB:ENSBTAG00000007200"/>
<dbReference type="eggNOG" id="KOG3057">
    <property type="taxonomic scope" value="Eukaryota"/>
</dbReference>
<dbReference type="HOGENOM" id="CLU_133964_3_1_1"/>
<dbReference type="InParanoid" id="Q6YFP9"/>
<dbReference type="OMA" id="VQRWNQQ"/>
<dbReference type="OrthoDB" id="1107506at2759"/>
<dbReference type="TreeFam" id="TF105065"/>
<dbReference type="Reactome" id="R-BTA-5628897">
    <property type="pathway name" value="TP53 Regulates Metabolic Genes"/>
</dbReference>
<dbReference type="Reactome" id="R-BTA-611105">
    <property type="pathway name" value="Respiratory electron transport"/>
</dbReference>
<dbReference type="Reactome" id="R-BTA-9707564">
    <property type="pathway name" value="Cytoprotection by HMOX1"/>
</dbReference>
<dbReference type="Reactome" id="R-BTA-9864848">
    <property type="pathway name" value="Complex IV assembly"/>
</dbReference>
<dbReference type="UniPathway" id="UPA00705"/>
<dbReference type="Proteomes" id="UP000009136">
    <property type="component" value="Chromosome 18"/>
</dbReference>
<dbReference type="Bgee" id="ENSBTAG00000007200">
    <property type="expression patterns" value="Expressed in spermatocyte and 73 other cell types or tissues"/>
</dbReference>
<dbReference type="GO" id="GO:0030061">
    <property type="term" value="C:mitochondrial crista"/>
    <property type="evidence" value="ECO:0000318"/>
    <property type="project" value="GO_Central"/>
</dbReference>
<dbReference type="GO" id="GO:0005739">
    <property type="term" value="C:mitochondrion"/>
    <property type="evidence" value="ECO:0000318"/>
    <property type="project" value="GO_Central"/>
</dbReference>
<dbReference type="GO" id="GO:0045277">
    <property type="term" value="C:respiratory chain complex IV"/>
    <property type="evidence" value="ECO:0007669"/>
    <property type="project" value="InterPro"/>
</dbReference>
<dbReference type="GO" id="GO:0006119">
    <property type="term" value="P:oxidative phosphorylation"/>
    <property type="evidence" value="ECO:0007669"/>
    <property type="project" value="UniProtKB-UniPathway"/>
</dbReference>
<dbReference type="CDD" id="cd00926">
    <property type="entry name" value="Cyt_c_Oxidase_VIb"/>
    <property type="match status" value="1"/>
</dbReference>
<dbReference type="FunFam" id="1.10.10.140:FF:000005">
    <property type="entry name" value="Cytochrome c oxidase subunit"/>
    <property type="match status" value="1"/>
</dbReference>
<dbReference type="Gene3D" id="1.10.10.140">
    <property type="entry name" value="Cytochrome c oxidase, subunit VIb"/>
    <property type="match status" value="1"/>
</dbReference>
<dbReference type="InterPro" id="IPR048280">
    <property type="entry name" value="COX6B-like"/>
</dbReference>
<dbReference type="InterPro" id="IPR036549">
    <property type="entry name" value="CX6/COA6-like_sf"/>
</dbReference>
<dbReference type="InterPro" id="IPR003213">
    <property type="entry name" value="Cyt_c_oxidase_su6B"/>
</dbReference>
<dbReference type="PANTHER" id="PTHR11387">
    <property type="entry name" value="CYTOCHROME C OXIDASE SUBUNIT 6B"/>
    <property type="match status" value="1"/>
</dbReference>
<dbReference type="Pfam" id="PF02297">
    <property type="entry name" value="COX6B"/>
    <property type="match status" value="1"/>
</dbReference>
<dbReference type="PIRSF" id="PIRSF000278">
    <property type="entry name" value="Cyt_c_oxidase_6B"/>
    <property type="match status" value="1"/>
</dbReference>
<dbReference type="SUPFAM" id="SSF47694">
    <property type="entry name" value="Cytochrome c oxidase subunit h"/>
    <property type="match status" value="1"/>
</dbReference>
<dbReference type="PROSITE" id="PS51808">
    <property type="entry name" value="CHCH"/>
    <property type="match status" value="1"/>
</dbReference>
<gene>
    <name type="primary">COX6B2</name>
</gene>
<organism>
    <name type="scientific">Bos taurus</name>
    <name type="common">Bovine</name>
    <dbReference type="NCBI Taxonomy" id="9913"/>
    <lineage>
        <taxon>Eukaryota</taxon>
        <taxon>Metazoa</taxon>
        <taxon>Chordata</taxon>
        <taxon>Craniata</taxon>
        <taxon>Vertebrata</taxon>
        <taxon>Euteleostomi</taxon>
        <taxon>Mammalia</taxon>
        <taxon>Eutheria</taxon>
        <taxon>Laurasiatheria</taxon>
        <taxon>Artiodactyla</taxon>
        <taxon>Ruminantia</taxon>
        <taxon>Pecora</taxon>
        <taxon>Bovidae</taxon>
        <taxon>Bovinae</taxon>
        <taxon>Bos</taxon>
    </lineage>
</organism>
<keyword id="KW-1015">Disulfide bond</keyword>
<keyword id="KW-0472">Membrane</keyword>
<keyword id="KW-0496">Mitochondrion</keyword>
<keyword id="KW-0999">Mitochondrion inner membrane</keyword>
<keyword id="KW-1185">Reference proteome</keyword>
<accession>Q6YFP9</accession>
<accession>Q32KV3</accession>
<evidence type="ECO:0000250" key="1">
    <source>
        <dbReference type="UniProtKB" id="P00429"/>
    </source>
</evidence>
<evidence type="ECO:0000250" key="2">
    <source>
        <dbReference type="UniProtKB" id="Q01519"/>
    </source>
</evidence>
<evidence type="ECO:0000255" key="3">
    <source>
        <dbReference type="PROSITE-ProRule" id="PRU01150"/>
    </source>
</evidence>
<evidence type="ECO:0000305" key="4"/>
<feature type="chain" id="PRO_0000194920" description="Cytochrome c oxidase subunit 6B2">
    <location>
        <begin position="1"/>
        <end position="88"/>
    </location>
</feature>
<feature type="domain" description="CHCH" evidence="3">
    <location>
        <begin position="29"/>
        <end position="75"/>
    </location>
</feature>
<feature type="short sequence motif" description="Cx9C motif" evidence="3">
    <location>
        <begin position="32"/>
        <end position="42"/>
    </location>
</feature>
<feature type="short sequence motif" description="Cx10C motif" evidence="3">
    <location>
        <begin position="56"/>
        <end position="67"/>
    </location>
</feature>
<feature type="disulfide bond" evidence="3">
    <location>
        <begin position="32"/>
        <end position="67"/>
    </location>
</feature>
<feature type="disulfide bond" evidence="3">
    <location>
        <begin position="42"/>
        <end position="56"/>
    </location>
</feature>
<feature type="sequence conflict" description="In Ref. 2; AAI09912." evidence="4" ref="2">
    <original>Y</original>
    <variation>S</variation>
    <location>
        <position position="58"/>
    </location>
</feature>
<reference key="1">
    <citation type="journal article" date="2003" name="Mol. Reprod. Dev.">
        <title>Cytochrome c oxidase of mammals contains a testes-specific isoform of subunit VIb -- the counterpart to testes-specific cytochrome c?</title>
        <authorList>
            <person name="Huttemann M."/>
            <person name="Jaradat S."/>
            <person name="Grossman L.I."/>
        </authorList>
    </citation>
    <scope>NUCLEOTIDE SEQUENCE [MRNA]</scope>
    <source>
        <tissue>Testis</tissue>
    </source>
</reference>
<reference key="2">
    <citation type="submission" date="2005-11" db="EMBL/GenBank/DDBJ databases">
        <authorList>
            <consortium name="NIH - Mammalian Gene Collection (MGC) project"/>
        </authorList>
    </citation>
    <scope>NUCLEOTIDE SEQUENCE [LARGE SCALE MRNA]</scope>
    <source>
        <strain>Crossbred X Angus</strain>
        <tissue>Liver</tissue>
    </source>
</reference>